<sequence>MLLFFTLGLLIHFVFFASIFDIYFTSPLVHGMTPQFTPLPPPARRLVLFVADGLRADALYELDENGNSRAPFIRNIIMHEGSWGISHTRVPTESRPGHVALIAGFYEDVSAVAKGWKENPVEFDSLFNESKYTWSWGSPDILPMFAKGASGDHVYTYSYDAKREDFGAQDATKLDTWVFDNVKDFFHHARNNQSLFSKINEEKIVFFLHLLGIDTNGHAHRPSSRDYKHNIKKVDDGVKEIVSMFNHFYGNDGKTTFIFTSDHGMTDWGSHGAGHPSETLTPLVTWGAGIKYPQRVSAQQFDDAFLKEWRLENWKRLDVNQADIAPLMTSLIGVPFPLNSVGILPVDYLNNTDLFKAESMFTNAVQILEQFKVKMTQKKEVTLPFLFTPFKLLSDSKQFNILRKARSYIKHRKFDEVVSLCKELIHLALKGLSYYHTYDRFFLGVNVVIGFVGWISYASLLIIKSHSNLIKGVSKEVKKPSHLLPCSFVAIGILVAFFLLIQACPWTYYVYGLLPLPIWYAVLREFQVIQDLVVSVLTYPLSHFVGYLLAFTLGIEVLVLSFFYRYMLTAGLTAFAAWPFLTRLWTRAKMTSLSWTFFSLLLAVFPLMPVVGRKPDISLVMGAGLLVLLLSLCVVTSLMKRKDSFIKEELLVHLLQVLSTVLSMYVVYSTQSSLLRKQGLPLMNQIISWATLASSLVVPLLSSPVLFQRLFSILLSLMSTYLLLSTGYEALFPLVLSCLMFVWINIEQETLQQSGVCCKQKLTSIQFSYNTDITQFRQLYLDDIRRAFFLVFFLVTAFFGTGNIASINSFDLASVYCFLTVFSPFMMGALMMWKILIPFVLVMCAFEAVQLTTQLSSKSLFLIVLVISDIMALHFFFLVKDYGSWLDIGTSISHYVIVMSMTIFLVFLNGLAQLLTTKKLRLCGKPKSHFM</sequence>
<name>PIGN_HUMAN</name>
<proteinExistence type="evidence at protein level"/>
<keyword id="KW-0225">Disease variant</keyword>
<keyword id="KW-0256">Endoplasmic reticulum</keyword>
<keyword id="KW-0887">Epilepsy</keyword>
<keyword id="KW-0325">Glycoprotein</keyword>
<keyword id="KW-0337">GPI-anchor biosynthesis</keyword>
<keyword id="KW-0472">Membrane</keyword>
<keyword id="KW-1267">Proteomics identification</keyword>
<keyword id="KW-1185">Reference proteome</keyword>
<keyword id="KW-0808">Transferase</keyword>
<keyword id="KW-0812">Transmembrane</keyword>
<keyword id="KW-1133">Transmembrane helix</keyword>
<reference key="1">
    <citation type="journal article" date="1999" name="Mol. Biol. Cell">
        <title>MCD4 encodes a conserved endoplasmic reticulum membrane protein essential for glycosylphosphatidylinositol anchor synthesis in yeast.</title>
        <authorList>
            <person name="Gaynor E.C."/>
            <person name="Mondesert G."/>
            <person name="Grimme S.J."/>
            <person name="Reed S.I."/>
            <person name="Orlean P."/>
            <person name="Emr S.D."/>
        </authorList>
    </citation>
    <scope>NUCLEOTIDE SEQUENCE [MRNA]</scope>
</reference>
<reference key="2">
    <citation type="journal article" date="2004" name="Genome Res.">
        <title>The status, quality, and expansion of the NIH full-length cDNA project: the Mammalian Gene Collection (MGC).</title>
        <authorList>
            <consortium name="The MGC Project Team"/>
        </authorList>
    </citation>
    <scope>NUCLEOTIDE SEQUENCE [LARGE SCALE MRNA]</scope>
    <scope>VARIANT ASP-229</scope>
    <source>
        <tissue>Testis</tissue>
    </source>
</reference>
<reference key="3">
    <citation type="journal article" date="2007" name="BMC Genomics">
        <title>The full-ORF clone resource of the German cDNA consortium.</title>
        <authorList>
            <person name="Bechtel S."/>
            <person name="Rosenfelder H."/>
            <person name="Duda A."/>
            <person name="Schmidt C.P."/>
            <person name="Ernst U."/>
            <person name="Wellenreuther R."/>
            <person name="Mehrle A."/>
            <person name="Schuster C."/>
            <person name="Bahr A."/>
            <person name="Bloecker H."/>
            <person name="Heubner D."/>
            <person name="Hoerlein A."/>
            <person name="Michel G."/>
            <person name="Wedler H."/>
            <person name="Koehrer K."/>
            <person name="Ottenwaelder B."/>
            <person name="Poustka A."/>
            <person name="Wiemann S."/>
            <person name="Schupp I."/>
        </authorList>
    </citation>
    <scope>NUCLEOTIDE SEQUENCE [LARGE SCALE MRNA] OF 107-931</scope>
    <source>
        <tissue>Testis</tissue>
    </source>
</reference>
<reference key="4">
    <citation type="journal article" date="2013" name="Nature">
        <title>Replication stress links structural and numerical cancer chromosomal instability.</title>
        <authorList>
            <person name="Burrell R.A."/>
            <person name="McClelland S.E."/>
            <person name="Endesfelder D."/>
            <person name="Groth P."/>
            <person name="Weller M.C."/>
            <person name="Shaikh N."/>
            <person name="Domingo E."/>
            <person name="Kanu N."/>
            <person name="Dewhurst S.M."/>
            <person name="Gronroos E."/>
            <person name="Chew S.K."/>
            <person name="Rowan A.J."/>
            <person name="Schenk A."/>
            <person name="Sheffer M."/>
            <person name="Howell M."/>
            <person name="Kschischo M."/>
            <person name="Behrens A."/>
            <person name="Helleday T."/>
            <person name="Bartek J."/>
            <person name="Tomlinson I.P."/>
            <person name="Swanton C."/>
        </authorList>
    </citation>
    <scope>FUNCTION</scope>
</reference>
<reference key="5">
    <citation type="journal article" date="2011" name="J. Med. Genet.">
        <title>Multiple congenital anomalies-hypotonia-seizures syndrome is caused by a mutation in PIGN.</title>
        <authorList>
            <person name="Maydan G."/>
            <person name="Noyman I."/>
            <person name="Har-Zahav A."/>
            <person name="Neriah Z.B."/>
            <person name="Pasmanik-Chor M."/>
            <person name="Yeheskel A."/>
            <person name="Albin-Kaplanski A."/>
            <person name="Maya I."/>
            <person name="Magal N."/>
            <person name="Birk E."/>
            <person name="Simon A.J."/>
            <person name="Halevy A."/>
            <person name="Rechavi G."/>
            <person name="Shohat M."/>
            <person name="Straussberg R."/>
            <person name="Basel-Vanagaite L."/>
        </authorList>
    </citation>
    <scope>VARIANT MCAHS1 GLN-709</scope>
</reference>
<comment type="function">
    <text evidence="1 5">Ethanolamine phosphate transferase that catalyzes an ethanolamine phosphate (EtNP) transfer from phosphatidylethanolamine (PE) to the 2-OH position of the first alpha-1,4-linked mannose of the alpha-D-Man-(1-&gt;6)-alpha-D-Man-(1-&gt;4)-alpha-D-GlcN-(1-&gt;6)-(1-radyl,2-acyl-sn-glycero-3-phospho)-2-acyl-inositol (also termed H3) intermediate to generate an alpha-D-Man-(1-&gt;6)-2-PEtn-alpha-D-Man-(1-&gt;4)-alpha-D-GlcN-(1-&gt;6)-(1-radyl,2-acyl-sn-glycero-3-phospho)-2-acyl-inositol and participates in the eighth step of the glycosylphosphatidylinositol-anchor biosynthesis (By similarity). May act as suppressor of replication stress and chromosome missegregation (PubMed:23446422).</text>
</comment>
<comment type="pathway">
    <text evidence="1">Glycolipid biosynthesis; glycosylphosphatidylinositol-anchor biosynthesis.</text>
</comment>
<comment type="subcellular location">
    <subcellularLocation>
        <location evidence="1">Endoplasmic reticulum membrane</location>
        <topology evidence="2">Multi-pass membrane protein</topology>
    </subcellularLocation>
</comment>
<comment type="disease" evidence="4">
    <disease id="DI-03203">
        <name>Multiple congenital anomalies-hypotonia-seizures syndrome 1</name>
        <acronym>MCAHS1</acronym>
        <description>An autosomal recessive disorder characterized by neonatal hypotonia, lack of psychomotor development, seizures, dysmorphic features, and variable congenital anomalies involving the cardiac, urinary, and gastrointestinal systems. Most affected individuals die before 3 years of age.</description>
        <dbReference type="MIM" id="614080"/>
    </disease>
    <text>The disease is caused by variants affecting the gene represented in this entry.</text>
</comment>
<comment type="similarity">
    <text evidence="7">Belongs to the PIGG/PIGN/PIGO family. PIGN subfamily.</text>
</comment>
<evidence type="ECO:0000250" key="1">
    <source>
        <dbReference type="UniProtKB" id="Q9R1S3"/>
    </source>
</evidence>
<evidence type="ECO:0000255" key="2"/>
<evidence type="ECO:0000269" key="3">
    <source>
    </source>
</evidence>
<evidence type="ECO:0000269" key="4">
    <source>
    </source>
</evidence>
<evidence type="ECO:0000269" key="5">
    <source>
    </source>
</evidence>
<evidence type="ECO:0000303" key="6">
    <source>
    </source>
</evidence>
<evidence type="ECO:0000305" key="7"/>
<evidence type="ECO:0000312" key="8">
    <source>
        <dbReference type="HGNC" id="HGNC:8967"/>
    </source>
</evidence>
<gene>
    <name evidence="8" type="primary">PIGN</name>
    <name evidence="6" type="synonym">MCD4</name>
</gene>
<organism>
    <name type="scientific">Homo sapiens</name>
    <name type="common">Human</name>
    <dbReference type="NCBI Taxonomy" id="9606"/>
    <lineage>
        <taxon>Eukaryota</taxon>
        <taxon>Metazoa</taxon>
        <taxon>Chordata</taxon>
        <taxon>Craniata</taxon>
        <taxon>Vertebrata</taxon>
        <taxon>Euteleostomi</taxon>
        <taxon>Mammalia</taxon>
        <taxon>Eutheria</taxon>
        <taxon>Euarchontoglires</taxon>
        <taxon>Primates</taxon>
        <taxon>Haplorrhini</taxon>
        <taxon>Catarrhini</taxon>
        <taxon>Hominidae</taxon>
        <taxon>Homo</taxon>
    </lineage>
</organism>
<protein>
    <recommendedName>
        <fullName evidence="7">GPI ethanolamine phosphate transferase 1</fullName>
        <ecNumber evidence="1">2.-.-.-</ecNumber>
    </recommendedName>
    <alternativeName>
        <fullName>GPI-ethanolamine transferase I</fullName>
        <shortName>GPI-ETI</shortName>
    </alternativeName>
    <alternativeName>
        <fullName evidence="6">MCD4 homolog</fullName>
    </alternativeName>
    <alternativeName>
        <fullName>Phosphatidylinositol-glycan biosynthesis class N protein</fullName>
        <shortName evidence="1">PIG-N</shortName>
    </alternativeName>
</protein>
<accession>O95427</accession>
<accession>Q7L8F8</accession>
<accession>Q8TC01</accession>
<accession>Q9NT05</accession>
<feature type="chain" id="PRO_0000246198" description="GPI ethanolamine phosphate transferase 1">
    <location>
        <begin position="1"/>
        <end position="931"/>
    </location>
</feature>
<feature type="topological domain" description="Cytoplasmic" evidence="2">
    <location>
        <position position="1"/>
    </location>
</feature>
<feature type="transmembrane region" description="Helical" evidence="2">
    <location>
        <begin position="2"/>
        <end position="24"/>
    </location>
</feature>
<feature type="topological domain" description="Lumenal" evidence="2">
    <location>
        <begin position="25"/>
        <end position="442"/>
    </location>
</feature>
<feature type="transmembrane region" description="Helical" evidence="2">
    <location>
        <begin position="443"/>
        <end position="463"/>
    </location>
</feature>
<feature type="topological domain" description="Cytoplasmic" evidence="2">
    <location>
        <begin position="464"/>
        <end position="482"/>
    </location>
</feature>
<feature type="transmembrane region" description="Helical" evidence="2">
    <location>
        <begin position="483"/>
        <end position="503"/>
    </location>
</feature>
<feature type="topological domain" description="Lumenal" evidence="2">
    <location>
        <begin position="504"/>
        <end position="508"/>
    </location>
</feature>
<feature type="transmembrane region" description="Helical" evidence="2">
    <location>
        <begin position="509"/>
        <end position="529"/>
    </location>
</feature>
<feature type="topological domain" description="Cytoplasmic" evidence="2">
    <location>
        <begin position="530"/>
        <end position="543"/>
    </location>
</feature>
<feature type="transmembrane region" description="Helical" evidence="2">
    <location>
        <begin position="544"/>
        <end position="564"/>
    </location>
</feature>
<feature type="topological domain" description="Lumenal" evidence="2">
    <location>
        <position position="565"/>
    </location>
</feature>
<feature type="transmembrane region" description="Helical" evidence="2">
    <location>
        <begin position="566"/>
        <end position="586"/>
    </location>
</feature>
<feature type="topological domain" description="Cytoplasmic" evidence="2">
    <location>
        <begin position="587"/>
        <end position="591"/>
    </location>
</feature>
<feature type="transmembrane region" description="Helical" evidence="2">
    <location>
        <begin position="592"/>
        <end position="612"/>
    </location>
</feature>
<feature type="topological domain" description="Lumenal" evidence="2">
    <location>
        <begin position="613"/>
        <end position="618"/>
    </location>
</feature>
<feature type="transmembrane region" description="Helical" evidence="2">
    <location>
        <begin position="619"/>
        <end position="639"/>
    </location>
</feature>
<feature type="topological domain" description="Cytoplasmic" evidence="2">
    <location>
        <begin position="640"/>
        <end position="649"/>
    </location>
</feature>
<feature type="transmembrane region" description="Helical" evidence="2">
    <location>
        <begin position="650"/>
        <end position="670"/>
    </location>
</feature>
<feature type="topological domain" description="Lumenal" evidence="2">
    <location>
        <begin position="671"/>
        <end position="685"/>
    </location>
</feature>
<feature type="transmembrane region" description="Helical" evidence="2">
    <location>
        <begin position="686"/>
        <end position="706"/>
    </location>
</feature>
<feature type="topological domain" description="Cytoplasmic" evidence="2">
    <location>
        <begin position="707"/>
        <end position="723"/>
    </location>
</feature>
<feature type="transmembrane region" description="Helical" evidence="2">
    <location>
        <begin position="724"/>
        <end position="744"/>
    </location>
</feature>
<feature type="topological domain" description="Lumenal" evidence="2">
    <location>
        <begin position="745"/>
        <end position="786"/>
    </location>
</feature>
<feature type="transmembrane region" description="Helical" evidence="2">
    <location>
        <begin position="787"/>
        <end position="807"/>
    </location>
</feature>
<feature type="topological domain" description="Cytoplasmic" evidence="2">
    <location>
        <begin position="808"/>
        <end position="824"/>
    </location>
</feature>
<feature type="transmembrane region" description="Helical" evidence="2">
    <location>
        <begin position="825"/>
        <end position="845"/>
    </location>
</feature>
<feature type="topological domain" description="Lumenal" evidence="2">
    <location>
        <begin position="846"/>
        <end position="858"/>
    </location>
</feature>
<feature type="transmembrane region" description="Helical" evidence="2">
    <location>
        <begin position="859"/>
        <end position="879"/>
    </location>
</feature>
<feature type="topological domain" description="Cytoplasmic" evidence="2">
    <location>
        <begin position="880"/>
        <end position="894"/>
    </location>
</feature>
<feature type="transmembrane region" description="Helical" evidence="2">
    <location>
        <begin position="895"/>
        <end position="915"/>
    </location>
</feature>
<feature type="topological domain" description="Lumenal" evidence="2">
    <location>
        <begin position="916"/>
        <end position="931"/>
    </location>
</feature>
<feature type="glycosylation site" description="N-linked (GlcNAc...) asparagine" evidence="2">
    <location>
        <position position="128"/>
    </location>
</feature>
<feature type="glycosylation site" description="N-linked (GlcNAc...) asparagine" evidence="2">
    <location>
        <position position="192"/>
    </location>
</feature>
<feature type="glycosylation site" description="N-linked (GlcNAc...) asparagine" evidence="2">
    <location>
        <position position="350"/>
    </location>
</feature>
<feature type="sequence variant" id="VAR_053573" description="In dbSNP:rs17069506.">
    <original>K</original>
    <variation>E</variation>
    <location>
        <position position="162"/>
    </location>
</feature>
<feature type="sequence variant" id="VAR_053574" description="In dbSNP:rs9320001." evidence="3">
    <original>H</original>
    <variation>D</variation>
    <location>
        <position position="229"/>
    </location>
</feature>
<feature type="sequence variant" id="VAR_053575" description="In dbSNP:rs3862712.">
    <original>L</original>
    <variation>F</variation>
    <location>
        <position position="469"/>
    </location>
</feature>
<feature type="sequence variant" id="VAR_053576" description="In dbSNP:rs3862712.">
    <original>I</original>
    <variation>L</variation>
    <location>
        <position position="470"/>
    </location>
</feature>
<feature type="sequence variant" id="VAR_066402" description="In MCAHS1; dbSNP:rs397514475." evidence="4">
    <original>R</original>
    <variation>Q</variation>
    <location>
        <position position="709"/>
    </location>
</feature>
<feature type="sequence variant" id="VAR_053577" description="In dbSNP:rs34231046.">
    <original>F</original>
    <variation>C</variation>
    <location>
        <position position="904"/>
    </location>
</feature>
<feature type="sequence variant" id="VAR_053578" description="In dbSNP:rs34231046.">
    <original>F</original>
    <variation>L</variation>
    <location>
        <position position="904"/>
    </location>
</feature>
<dbReference type="EC" id="2.-.-.-" evidence="1"/>
<dbReference type="EMBL" id="AF109219">
    <property type="protein sequence ID" value="AAD11432.1"/>
    <property type="molecule type" value="mRNA"/>
</dbReference>
<dbReference type="EMBL" id="BC028363">
    <property type="protein sequence ID" value="AAH28363.1"/>
    <property type="molecule type" value="mRNA"/>
</dbReference>
<dbReference type="EMBL" id="AL137607">
    <property type="protein sequence ID" value="CAB70839.1"/>
    <property type="molecule type" value="mRNA"/>
</dbReference>
<dbReference type="CCDS" id="CCDS45879.1"/>
<dbReference type="PIR" id="T46311">
    <property type="entry name" value="T46311"/>
</dbReference>
<dbReference type="RefSeq" id="NP_036459.1">
    <property type="nucleotide sequence ID" value="NM_012327.6"/>
</dbReference>
<dbReference type="RefSeq" id="NP_789744.1">
    <property type="nucleotide sequence ID" value="NM_176787.5"/>
</dbReference>
<dbReference type="RefSeq" id="XP_047293391.1">
    <property type="nucleotide sequence ID" value="XM_047437435.1"/>
</dbReference>
<dbReference type="RefSeq" id="XP_047293392.1">
    <property type="nucleotide sequence ID" value="XM_047437436.1"/>
</dbReference>
<dbReference type="RefSeq" id="XP_047293393.1">
    <property type="nucleotide sequence ID" value="XM_047437437.1"/>
</dbReference>
<dbReference type="RefSeq" id="XP_047293394.1">
    <property type="nucleotide sequence ID" value="XM_047437438.1"/>
</dbReference>
<dbReference type="RefSeq" id="XP_047293395.1">
    <property type="nucleotide sequence ID" value="XM_047437439.1"/>
</dbReference>
<dbReference type="RefSeq" id="XP_047293396.1">
    <property type="nucleotide sequence ID" value="XM_047437440.1"/>
</dbReference>
<dbReference type="SMR" id="O95427"/>
<dbReference type="BioGRID" id="117100">
    <property type="interactions" value="75"/>
</dbReference>
<dbReference type="FunCoup" id="O95427">
    <property type="interactions" value="1526"/>
</dbReference>
<dbReference type="IntAct" id="O95427">
    <property type="interactions" value="59"/>
</dbReference>
<dbReference type="STRING" id="9606.ENSP00000492233"/>
<dbReference type="GlyConnect" id="1284">
    <property type="glycosylation" value="2 N-Linked glycans (1 site)"/>
</dbReference>
<dbReference type="GlyCosmos" id="O95427">
    <property type="glycosylation" value="3 sites, 1 glycan"/>
</dbReference>
<dbReference type="GlyGen" id="O95427">
    <property type="glycosylation" value="4 sites, 8 N-linked glycans (2 sites)"/>
</dbReference>
<dbReference type="iPTMnet" id="O95427"/>
<dbReference type="PhosphoSitePlus" id="O95427"/>
<dbReference type="SwissPalm" id="O95427"/>
<dbReference type="BioMuta" id="PIGN"/>
<dbReference type="jPOST" id="O95427"/>
<dbReference type="MassIVE" id="O95427"/>
<dbReference type="PaxDb" id="9606-ENSP00000350263"/>
<dbReference type="PeptideAtlas" id="O95427"/>
<dbReference type="ProteomicsDB" id="50868"/>
<dbReference type="Pumba" id="O95427"/>
<dbReference type="Antibodypedia" id="48918">
    <property type="antibodies" value="64 antibodies from 15 providers"/>
</dbReference>
<dbReference type="DNASU" id="23556"/>
<dbReference type="Ensembl" id="ENST00000357637.10">
    <property type="protein sequence ID" value="ENSP00000350263.4"/>
    <property type="gene ID" value="ENSG00000197563.11"/>
</dbReference>
<dbReference type="Ensembl" id="ENST00000400334.7">
    <property type="protein sequence ID" value="ENSP00000383188.2"/>
    <property type="gene ID" value="ENSG00000197563.11"/>
</dbReference>
<dbReference type="Ensembl" id="ENST00000638936.1">
    <property type="protein sequence ID" value="ENSP00000492592.1"/>
    <property type="gene ID" value="ENSG00000197563.11"/>
</dbReference>
<dbReference type="Ensembl" id="ENST00000640050.1">
    <property type="protein sequence ID" value="ENSP00000492051.1"/>
    <property type="gene ID" value="ENSG00000197563.11"/>
</dbReference>
<dbReference type="Ensembl" id="ENST00000640145.1">
    <property type="protein sequence ID" value="ENSP00000491525.1"/>
    <property type="gene ID" value="ENSG00000197563.11"/>
</dbReference>
<dbReference type="Ensembl" id="ENST00000640252.2">
    <property type="protein sequence ID" value="ENSP00000492233.1"/>
    <property type="gene ID" value="ENSG00000197563.11"/>
</dbReference>
<dbReference type="Ensembl" id="ENST00000640876.1">
    <property type="protein sequence ID" value="ENSP00000491628.1"/>
    <property type="gene ID" value="ENSG00000197563.11"/>
</dbReference>
<dbReference type="GeneID" id="23556"/>
<dbReference type="KEGG" id="hsa:23556"/>
<dbReference type="MANE-Select" id="ENST00000640252.2">
    <property type="protein sequence ID" value="ENSP00000492233.1"/>
    <property type="RefSeq nucleotide sequence ID" value="NM_176787.5"/>
    <property type="RefSeq protein sequence ID" value="NP_789744.1"/>
</dbReference>
<dbReference type="UCSC" id="uc021ulb.3">
    <property type="organism name" value="human"/>
</dbReference>
<dbReference type="AGR" id="HGNC:8967"/>
<dbReference type="CTD" id="23556"/>
<dbReference type="DisGeNET" id="23556"/>
<dbReference type="GeneCards" id="PIGN"/>
<dbReference type="GeneReviews" id="PIGN"/>
<dbReference type="HGNC" id="HGNC:8967">
    <property type="gene designation" value="PIGN"/>
</dbReference>
<dbReference type="HPA" id="ENSG00000197563">
    <property type="expression patterns" value="Low tissue specificity"/>
</dbReference>
<dbReference type="MalaCards" id="PIGN"/>
<dbReference type="MIM" id="606097">
    <property type="type" value="gene"/>
</dbReference>
<dbReference type="MIM" id="614080">
    <property type="type" value="phenotype"/>
</dbReference>
<dbReference type="neXtProt" id="NX_O95427"/>
<dbReference type="OpenTargets" id="ENSG00000197563"/>
<dbReference type="Orphanet" id="2059">
    <property type="disease" value="Fryns syndrome"/>
</dbReference>
<dbReference type="Orphanet" id="280633">
    <property type="disease" value="Multiple congenital anomalies-hypotonia-seizures syndrome"/>
</dbReference>
<dbReference type="PharmGKB" id="PA33298"/>
<dbReference type="VEuPathDB" id="HostDB:ENSG00000197563"/>
<dbReference type="eggNOG" id="KOG2124">
    <property type="taxonomic scope" value="Eukaryota"/>
</dbReference>
<dbReference type="GeneTree" id="ENSGT00390000017600"/>
<dbReference type="HOGENOM" id="CLU_007676_0_0_1"/>
<dbReference type="InParanoid" id="O95427"/>
<dbReference type="OrthoDB" id="2748310at2759"/>
<dbReference type="PAN-GO" id="O95427">
    <property type="GO annotations" value="3 GO annotations based on evolutionary models"/>
</dbReference>
<dbReference type="PhylomeDB" id="O95427"/>
<dbReference type="TreeFam" id="TF300506"/>
<dbReference type="PathwayCommons" id="O95427"/>
<dbReference type="Reactome" id="R-HSA-162710">
    <property type="pathway name" value="Synthesis of glycosylphosphatidylinositol (GPI)"/>
</dbReference>
<dbReference type="SignaLink" id="O95427"/>
<dbReference type="UniPathway" id="UPA00196"/>
<dbReference type="BioGRID-ORCS" id="23556">
    <property type="hits" value="19 hits in 1150 CRISPR screens"/>
</dbReference>
<dbReference type="ChiTaRS" id="PIGN">
    <property type="organism name" value="human"/>
</dbReference>
<dbReference type="GenomeRNAi" id="23556"/>
<dbReference type="Pharos" id="O95427">
    <property type="development level" value="Tbio"/>
</dbReference>
<dbReference type="PRO" id="PR:O95427"/>
<dbReference type="Proteomes" id="UP000005640">
    <property type="component" value="Chromosome 18"/>
</dbReference>
<dbReference type="RNAct" id="O95427">
    <property type="molecule type" value="protein"/>
</dbReference>
<dbReference type="Bgee" id="ENSG00000197563">
    <property type="expression patterns" value="Expressed in buccal mucosa cell and 165 other cell types or tissues"/>
</dbReference>
<dbReference type="ExpressionAtlas" id="O95427">
    <property type="expression patterns" value="baseline and differential"/>
</dbReference>
<dbReference type="GO" id="GO:0005829">
    <property type="term" value="C:cytosol"/>
    <property type="evidence" value="ECO:0000314"/>
    <property type="project" value="HPA"/>
</dbReference>
<dbReference type="GO" id="GO:0005789">
    <property type="term" value="C:endoplasmic reticulum membrane"/>
    <property type="evidence" value="ECO:0000318"/>
    <property type="project" value="GO_Central"/>
</dbReference>
<dbReference type="GO" id="GO:0016020">
    <property type="term" value="C:membrane"/>
    <property type="evidence" value="ECO:0007005"/>
    <property type="project" value="UniProtKB"/>
</dbReference>
<dbReference type="GO" id="GO:0005886">
    <property type="term" value="C:plasma membrane"/>
    <property type="evidence" value="ECO:0000314"/>
    <property type="project" value="HPA"/>
</dbReference>
<dbReference type="GO" id="GO:0051377">
    <property type="term" value="F:mannose-ethanolamine phosphotransferase activity"/>
    <property type="evidence" value="ECO:0000250"/>
    <property type="project" value="UniProtKB"/>
</dbReference>
<dbReference type="GO" id="GO:0006506">
    <property type="term" value="P:GPI anchor biosynthetic process"/>
    <property type="evidence" value="ECO:0000250"/>
    <property type="project" value="UniProtKB"/>
</dbReference>
<dbReference type="CDD" id="cd16020">
    <property type="entry name" value="GPI_EPT_1"/>
    <property type="match status" value="1"/>
</dbReference>
<dbReference type="FunFam" id="3.40.720.10:FF:000020">
    <property type="entry name" value="Phosphatidylinositol glycan anchor biosynthesis class N"/>
    <property type="match status" value="1"/>
</dbReference>
<dbReference type="Gene3D" id="3.40.720.10">
    <property type="entry name" value="Alkaline Phosphatase, subunit A"/>
    <property type="match status" value="2"/>
</dbReference>
<dbReference type="InterPro" id="IPR017850">
    <property type="entry name" value="Alkaline_phosphatase_core_sf"/>
</dbReference>
<dbReference type="InterPro" id="IPR007070">
    <property type="entry name" value="GPI_EtnP_transferase_1"/>
</dbReference>
<dbReference type="InterPro" id="IPR017852">
    <property type="entry name" value="GPI_EtnP_transferase_1_C"/>
</dbReference>
<dbReference type="InterPro" id="IPR002591">
    <property type="entry name" value="Phosphodiest/P_Trfase"/>
</dbReference>
<dbReference type="InterPro" id="IPR037671">
    <property type="entry name" value="PIGN_N"/>
</dbReference>
<dbReference type="PANTHER" id="PTHR12250:SF0">
    <property type="entry name" value="GPI ETHANOLAMINE PHOSPHATE TRANSFERASE 1"/>
    <property type="match status" value="1"/>
</dbReference>
<dbReference type="PANTHER" id="PTHR12250">
    <property type="entry name" value="PHOSPHATIDYLINOSITOL GLYCAN, CLASS N"/>
    <property type="match status" value="1"/>
</dbReference>
<dbReference type="Pfam" id="PF01663">
    <property type="entry name" value="Phosphodiest"/>
    <property type="match status" value="1"/>
</dbReference>
<dbReference type="Pfam" id="PF04987">
    <property type="entry name" value="PigN"/>
    <property type="match status" value="1"/>
</dbReference>
<dbReference type="SUPFAM" id="SSF53649">
    <property type="entry name" value="Alkaline phosphatase-like"/>
    <property type="match status" value="1"/>
</dbReference>